<accession>P01723</accession>
<evidence type="ECO:0000250" key="1">
    <source>
        <dbReference type="UniProtKB" id="P01724"/>
    </source>
</evidence>
<evidence type="ECO:0007829" key="2">
    <source>
        <dbReference type="PDB" id="1Q0X"/>
    </source>
</evidence>
<sequence>MAWISLILSLLALSSGGAISQAVVTQESALTTSPGETVTLTCRSSTGAVTTSNYANWVQEKPDHLFTGLIGGTNNRAPGVPARFSGSLIGDKAALTITGAQTEDEAIYFCALWYSNH</sequence>
<dbReference type="EMBL" id="V00811">
    <property type="protein sequence ID" value="CAA24193.1"/>
    <property type="molecule type" value="Genomic_DNA"/>
</dbReference>
<dbReference type="PIR" id="A01994">
    <property type="entry name" value="L1MSV"/>
</dbReference>
<dbReference type="PIR" id="PH1090">
    <property type="entry name" value="PH1090"/>
</dbReference>
<dbReference type="PDB" id="1P4B">
    <property type="method" value="X-ray"/>
    <property type="resolution" value="2.35 A"/>
    <property type="chains" value="L=22-117"/>
</dbReference>
<dbReference type="PDB" id="1P4I">
    <property type="method" value="X-ray"/>
    <property type="resolution" value="2.80 A"/>
    <property type="chains" value="L=22-117"/>
</dbReference>
<dbReference type="PDB" id="1Q0X">
    <property type="method" value="X-ray"/>
    <property type="resolution" value="1.60 A"/>
    <property type="chains" value="L=22-117"/>
</dbReference>
<dbReference type="PDB" id="1SM3">
    <property type="method" value="X-ray"/>
    <property type="resolution" value="1.95 A"/>
    <property type="chains" value="L=23-117"/>
</dbReference>
<dbReference type="PDBsum" id="1P4B"/>
<dbReference type="PDBsum" id="1P4I"/>
<dbReference type="PDBsum" id="1Q0X"/>
<dbReference type="PDBsum" id="1SM3"/>
<dbReference type="SMR" id="P01723"/>
<dbReference type="FunCoup" id="P01723">
    <property type="interactions" value="785"/>
</dbReference>
<dbReference type="IntAct" id="P01723">
    <property type="interactions" value="1"/>
</dbReference>
<dbReference type="InParanoid" id="P01723"/>
<dbReference type="EvolutionaryTrace" id="P01723"/>
<dbReference type="Proteomes" id="UP000000589">
    <property type="component" value="Unplaced"/>
</dbReference>
<dbReference type="RNAct" id="P01723">
    <property type="molecule type" value="protein"/>
</dbReference>
<dbReference type="GO" id="GO:0019814">
    <property type="term" value="C:immunoglobulin complex"/>
    <property type="evidence" value="ECO:0000318"/>
    <property type="project" value="GO_Central"/>
</dbReference>
<dbReference type="GO" id="GO:0005886">
    <property type="term" value="C:plasma membrane"/>
    <property type="evidence" value="ECO:0000304"/>
    <property type="project" value="Reactome"/>
</dbReference>
<dbReference type="GO" id="GO:0002250">
    <property type="term" value="P:adaptive immune response"/>
    <property type="evidence" value="ECO:0007669"/>
    <property type="project" value="UniProtKB-KW"/>
</dbReference>
<dbReference type="GO" id="GO:0006955">
    <property type="term" value="P:immune response"/>
    <property type="evidence" value="ECO:0000318"/>
    <property type="project" value="GO_Central"/>
</dbReference>
<dbReference type="FunFam" id="2.60.40.10:FF:002073">
    <property type="entry name" value="Ig lambda-1 chain V regions MOPC 104E/RPC20/J558/S104"/>
    <property type="match status" value="1"/>
</dbReference>
<dbReference type="Gene3D" id="2.60.40.10">
    <property type="entry name" value="Immunoglobulins"/>
    <property type="match status" value="1"/>
</dbReference>
<dbReference type="InterPro" id="IPR007110">
    <property type="entry name" value="Ig-like_dom"/>
</dbReference>
<dbReference type="InterPro" id="IPR036179">
    <property type="entry name" value="Ig-like_dom_sf"/>
</dbReference>
<dbReference type="InterPro" id="IPR013783">
    <property type="entry name" value="Ig-like_fold"/>
</dbReference>
<dbReference type="InterPro" id="IPR003599">
    <property type="entry name" value="Ig_sub"/>
</dbReference>
<dbReference type="InterPro" id="IPR013106">
    <property type="entry name" value="Ig_V-set"/>
</dbReference>
<dbReference type="InterPro" id="IPR050150">
    <property type="entry name" value="IgV_Light_Chain"/>
</dbReference>
<dbReference type="PANTHER" id="PTHR23267">
    <property type="entry name" value="IMMUNOGLOBULIN LIGHT CHAIN"/>
    <property type="match status" value="1"/>
</dbReference>
<dbReference type="Pfam" id="PF07686">
    <property type="entry name" value="V-set"/>
    <property type="match status" value="1"/>
</dbReference>
<dbReference type="SMART" id="SM00409">
    <property type="entry name" value="IG"/>
    <property type="match status" value="1"/>
</dbReference>
<dbReference type="SMART" id="SM00406">
    <property type="entry name" value="IGv"/>
    <property type="match status" value="1"/>
</dbReference>
<dbReference type="SUPFAM" id="SSF48726">
    <property type="entry name" value="Immunoglobulin"/>
    <property type="match status" value="1"/>
</dbReference>
<dbReference type="PROSITE" id="PS50835">
    <property type="entry name" value="IG_LIKE"/>
    <property type="match status" value="1"/>
</dbReference>
<keyword id="KW-0002">3D-structure</keyword>
<keyword id="KW-1064">Adaptive immunity</keyword>
<keyword id="KW-0391">Immunity</keyword>
<keyword id="KW-1280">Immunoglobulin</keyword>
<keyword id="KW-0873">Pyrrolidone carboxylic acid</keyword>
<keyword id="KW-1185">Reference proteome</keyword>
<keyword id="KW-0732">Signal</keyword>
<feature type="signal peptide">
    <location>
        <begin position="1"/>
        <end position="20"/>
    </location>
</feature>
<feature type="chain" id="PRO_0000015201" description="Ig lambda-1 chain V region">
    <location>
        <begin position="21"/>
        <end position="117"/>
    </location>
</feature>
<feature type="domain" description="Ig-like">
    <location>
        <begin position="21"/>
        <end position="117" status="greater than"/>
    </location>
</feature>
<feature type="modified residue" description="Pyrrolidone carboxylic acid" evidence="1">
    <location>
        <position position="21"/>
    </location>
</feature>
<feature type="non-terminal residue">
    <location>
        <position position="117"/>
    </location>
</feature>
<feature type="strand" evidence="2">
    <location>
        <begin position="24"/>
        <end position="26"/>
    </location>
</feature>
<feature type="strand" evidence="2">
    <location>
        <begin position="28"/>
        <end position="32"/>
    </location>
</feature>
<feature type="strand" evidence="2">
    <location>
        <begin position="38"/>
        <end position="47"/>
    </location>
</feature>
<feature type="helix" evidence="2">
    <location>
        <begin position="51"/>
        <end position="53"/>
    </location>
</feature>
<feature type="strand" evidence="2">
    <location>
        <begin position="56"/>
        <end position="61"/>
    </location>
</feature>
<feature type="turn" evidence="2">
    <location>
        <begin position="62"/>
        <end position="64"/>
    </location>
</feature>
<feature type="strand" evidence="2">
    <location>
        <begin position="65"/>
        <end position="71"/>
    </location>
</feature>
<feature type="turn" evidence="2">
    <location>
        <begin position="72"/>
        <end position="74"/>
    </location>
</feature>
<feature type="strand" evidence="2">
    <location>
        <begin position="84"/>
        <end position="89"/>
    </location>
</feature>
<feature type="strand" evidence="2">
    <location>
        <begin position="92"/>
        <end position="99"/>
    </location>
</feature>
<feature type="helix" evidence="2">
    <location>
        <begin position="102"/>
        <end position="104"/>
    </location>
</feature>
<feature type="strand" evidence="2">
    <location>
        <begin position="106"/>
        <end position="113"/>
    </location>
</feature>
<organism>
    <name type="scientific">Mus musculus</name>
    <name type="common">Mouse</name>
    <dbReference type="NCBI Taxonomy" id="10090"/>
    <lineage>
        <taxon>Eukaryota</taxon>
        <taxon>Metazoa</taxon>
        <taxon>Chordata</taxon>
        <taxon>Craniata</taxon>
        <taxon>Vertebrata</taxon>
        <taxon>Euteleostomi</taxon>
        <taxon>Mammalia</taxon>
        <taxon>Eutheria</taxon>
        <taxon>Euarchontoglires</taxon>
        <taxon>Glires</taxon>
        <taxon>Rodentia</taxon>
        <taxon>Myomorpha</taxon>
        <taxon>Muroidea</taxon>
        <taxon>Muridae</taxon>
        <taxon>Murinae</taxon>
        <taxon>Mus</taxon>
        <taxon>Mus</taxon>
    </lineage>
</organism>
<name>LV1A_MOUSE</name>
<protein>
    <recommendedName>
        <fullName>Ig lambda-1 chain V region</fullName>
    </recommendedName>
</protein>
<reference key="1">
    <citation type="journal article" date="1978" name="Cell">
        <title>Sequences of mouse immunoglobulin light chain genes before and after somatic changes.</title>
        <authorList>
            <person name="Bernard O."/>
            <person name="Hozumi N."/>
            <person name="Tonegawa S."/>
        </authorList>
    </citation>
    <scope>NUCLEOTIDE SEQUENCE [GENOMIC DNA]</scope>
</reference>
<proteinExistence type="evidence at protein level"/>